<organism>
    <name type="scientific">Vibrio cholerae serotype O1 (strain ATCC 39315 / El Tor Inaba N16961)</name>
    <dbReference type="NCBI Taxonomy" id="243277"/>
    <lineage>
        <taxon>Bacteria</taxon>
        <taxon>Pseudomonadati</taxon>
        <taxon>Pseudomonadota</taxon>
        <taxon>Gammaproteobacteria</taxon>
        <taxon>Vibrionales</taxon>
        <taxon>Vibrionaceae</taxon>
        <taxon>Vibrio</taxon>
    </lineage>
</organism>
<comment type="function">
    <text evidence="1">Catalyzes the ATP-dependent transfer of a sulfur to tRNA to produce 4-thiouridine in position 8 of tRNAs, which functions as a near-UV photosensor. Also catalyzes the transfer of sulfur to the sulfur carrier protein ThiS, forming ThiS-thiocarboxylate. This is a step in the synthesis of thiazole, in the thiamine biosynthesis pathway. The sulfur is donated as persulfide by IscS.</text>
</comment>
<comment type="catalytic activity">
    <reaction evidence="1">
        <text>[ThiI sulfur-carrier protein]-S-sulfanyl-L-cysteine + a uridine in tRNA + 2 reduced [2Fe-2S]-[ferredoxin] + ATP + H(+) = [ThiI sulfur-carrier protein]-L-cysteine + a 4-thiouridine in tRNA + 2 oxidized [2Fe-2S]-[ferredoxin] + AMP + diphosphate</text>
        <dbReference type="Rhea" id="RHEA:24176"/>
        <dbReference type="Rhea" id="RHEA-COMP:10000"/>
        <dbReference type="Rhea" id="RHEA-COMP:10001"/>
        <dbReference type="Rhea" id="RHEA-COMP:13337"/>
        <dbReference type="Rhea" id="RHEA-COMP:13338"/>
        <dbReference type="Rhea" id="RHEA-COMP:13339"/>
        <dbReference type="Rhea" id="RHEA-COMP:13340"/>
        <dbReference type="ChEBI" id="CHEBI:15378"/>
        <dbReference type="ChEBI" id="CHEBI:29950"/>
        <dbReference type="ChEBI" id="CHEBI:30616"/>
        <dbReference type="ChEBI" id="CHEBI:33019"/>
        <dbReference type="ChEBI" id="CHEBI:33737"/>
        <dbReference type="ChEBI" id="CHEBI:33738"/>
        <dbReference type="ChEBI" id="CHEBI:61963"/>
        <dbReference type="ChEBI" id="CHEBI:65315"/>
        <dbReference type="ChEBI" id="CHEBI:136798"/>
        <dbReference type="ChEBI" id="CHEBI:456215"/>
        <dbReference type="EC" id="2.8.1.4"/>
    </reaction>
</comment>
<comment type="catalytic activity">
    <reaction evidence="1">
        <text>[ThiS sulfur-carrier protein]-C-terminal Gly-Gly-AMP + S-sulfanyl-L-cysteinyl-[cysteine desulfurase] + AH2 = [ThiS sulfur-carrier protein]-C-terminal-Gly-aminoethanethioate + L-cysteinyl-[cysteine desulfurase] + A + AMP + 2 H(+)</text>
        <dbReference type="Rhea" id="RHEA:43340"/>
        <dbReference type="Rhea" id="RHEA-COMP:12157"/>
        <dbReference type="Rhea" id="RHEA-COMP:12158"/>
        <dbReference type="Rhea" id="RHEA-COMP:12910"/>
        <dbReference type="Rhea" id="RHEA-COMP:19908"/>
        <dbReference type="ChEBI" id="CHEBI:13193"/>
        <dbReference type="ChEBI" id="CHEBI:15378"/>
        <dbReference type="ChEBI" id="CHEBI:17499"/>
        <dbReference type="ChEBI" id="CHEBI:29950"/>
        <dbReference type="ChEBI" id="CHEBI:61963"/>
        <dbReference type="ChEBI" id="CHEBI:90618"/>
        <dbReference type="ChEBI" id="CHEBI:232372"/>
        <dbReference type="ChEBI" id="CHEBI:456215"/>
    </reaction>
</comment>
<comment type="pathway">
    <text evidence="1">Cofactor biosynthesis; thiamine diphosphate biosynthesis.</text>
</comment>
<comment type="subcellular location">
    <subcellularLocation>
        <location evidence="1">Cytoplasm</location>
    </subcellularLocation>
</comment>
<comment type="similarity">
    <text evidence="1">Belongs to the ThiI family.</text>
</comment>
<comment type="sequence caution" evidence="2">
    <conflict type="erroneous initiation">
        <sequence resource="EMBL-CDS" id="AAF94056"/>
    </conflict>
</comment>
<sequence>MKFIVKPHPEIFVKSESVRKRFTKILESNIRIIVKARTQGVAVFNRRDHIEVTSNSDTYYAEVLEILTTTPGIQQVLEVQQSSFTDLHNIYEQVLELNRANLENKTFVVRAKRRGKHDFTSIELERYVGGGLNQAIASAKVKLINPDVTVQVEVVDELLNQVIARHKGLGGFPLGTQEDVLSLISGGFDSGVSSYLHIKRGSKVHYCFFNLGGPAHEIGVKQTAYYLWQKYGSSAKVRFIAIDFAPVVAEILEKIDDGQMGVVLKRMFMRTAGMVAEKFGIQALVTGEALGQVSSQTLTNLRHIDNVTDTLILRPLINWDKEDIIRLAREIGTEDFAKTMPEFCGVISKSPTVKAVKEKLEEEEAKFDFALLDQVVYNARQIDIRDIGKESLEKAPEVELVNSAEEGNAVVLDIRSPDEEDESPLEIVGVEVKHLPFYKLATQFGDLDQSKTYLLYCSRGVMSRLQALYLQEQGFNNVKVYRP</sequence>
<accession>Q9KTK8</accession>
<feature type="chain" id="PRO_0000154884" description="tRNA sulfurtransferase">
    <location>
        <begin position="1"/>
        <end position="483"/>
    </location>
</feature>
<feature type="domain" description="THUMP" evidence="1">
    <location>
        <begin position="61"/>
        <end position="165"/>
    </location>
</feature>
<feature type="domain" description="Rhodanese" evidence="1">
    <location>
        <begin position="405"/>
        <end position="483"/>
    </location>
</feature>
<feature type="active site" description="Cysteine persulfide intermediate" evidence="1">
    <location>
        <position position="457"/>
    </location>
</feature>
<feature type="binding site" evidence="1">
    <location>
        <begin position="183"/>
        <end position="184"/>
    </location>
    <ligand>
        <name>ATP</name>
        <dbReference type="ChEBI" id="CHEBI:30616"/>
    </ligand>
</feature>
<feature type="binding site" evidence="1">
    <location>
        <position position="265"/>
    </location>
    <ligand>
        <name>ATP</name>
        <dbReference type="ChEBI" id="CHEBI:30616"/>
    </ligand>
</feature>
<feature type="binding site" evidence="1">
    <location>
        <position position="287"/>
    </location>
    <ligand>
        <name>ATP</name>
        <dbReference type="ChEBI" id="CHEBI:30616"/>
    </ligand>
</feature>
<feature type="binding site" evidence="1">
    <location>
        <position position="296"/>
    </location>
    <ligand>
        <name>ATP</name>
        <dbReference type="ChEBI" id="CHEBI:30616"/>
    </ligand>
</feature>
<feature type="disulfide bond" description="Redox-active" evidence="1">
    <location>
        <begin position="344"/>
        <end position="457"/>
    </location>
</feature>
<keyword id="KW-0067">ATP-binding</keyword>
<keyword id="KW-0963">Cytoplasm</keyword>
<keyword id="KW-1015">Disulfide bond</keyword>
<keyword id="KW-0547">Nucleotide-binding</keyword>
<keyword id="KW-0676">Redox-active center</keyword>
<keyword id="KW-1185">Reference proteome</keyword>
<keyword id="KW-0694">RNA-binding</keyword>
<keyword id="KW-0784">Thiamine biosynthesis</keyword>
<keyword id="KW-0808">Transferase</keyword>
<keyword id="KW-0820">tRNA-binding</keyword>
<proteinExistence type="inferred from homology"/>
<gene>
    <name evidence="1" type="primary">thiI</name>
    <name type="ordered locus">VC_0894</name>
</gene>
<reference key="1">
    <citation type="journal article" date="2000" name="Nature">
        <title>DNA sequence of both chromosomes of the cholera pathogen Vibrio cholerae.</title>
        <authorList>
            <person name="Heidelberg J.F."/>
            <person name="Eisen J.A."/>
            <person name="Nelson W.C."/>
            <person name="Clayton R.A."/>
            <person name="Gwinn M.L."/>
            <person name="Dodson R.J."/>
            <person name="Haft D.H."/>
            <person name="Hickey E.K."/>
            <person name="Peterson J.D."/>
            <person name="Umayam L.A."/>
            <person name="Gill S.R."/>
            <person name="Nelson K.E."/>
            <person name="Read T.D."/>
            <person name="Tettelin H."/>
            <person name="Richardson D.L."/>
            <person name="Ermolaeva M.D."/>
            <person name="Vamathevan J.J."/>
            <person name="Bass S."/>
            <person name="Qin H."/>
            <person name="Dragoi I."/>
            <person name="Sellers P."/>
            <person name="McDonald L.A."/>
            <person name="Utterback T.R."/>
            <person name="Fleischmann R.D."/>
            <person name="Nierman W.C."/>
            <person name="White O."/>
            <person name="Salzberg S.L."/>
            <person name="Smith H.O."/>
            <person name="Colwell R.R."/>
            <person name="Mekalanos J.J."/>
            <person name="Venter J.C."/>
            <person name="Fraser C.M."/>
        </authorList>
    </citation>
    <scope>NUCLEOTIDE SEQUENCE [LARGE SCALE GENOMIC DNA]</scope>
    <source>
        <strain>ATCC 39315 / El Tor Inaba N16961</strain>
    </source>
</reference>
<dbReference type="EC" id="2.8.1.4" evidence="1"/>
<dbReference type="EMBL" id="AE003852">
    <property type="protein sequence ID" value="AAF94056.1"/>
    <property type="status" value="ALT_INIT"/>
    <property type="molecule type" value="Genomic_DNA"/>
</dbReference>
<dbReference type="PIR" id="E82267">
    <property type="entry name" value="E82267"/>
</dbReference>
<dbReference type="RefSeq" id="NP_230541.2">
    <property type="nucleotide sequence ID" value="NC_002505.1"/>
</dbReference>
<dbReference type="RefSeq" id="WP_000668918.1">
    <property type="nucleotide sequence ID" value="NZ_LT906614.1"/>
</dbReference>
<dbReference type="SMR" id="Q9KTK8"/>
<dbReference type="STRING" id="243277.VC_0894"/>
<dbReference type="DNASU" id="2614123"/>
<dbReference type="EnsemblBacteria" id="AAF94056">
    <property type="protein sequence ID" value="AAF94056"/>
    <property type="gene ID" value="VC_0894"/>
</dbReference>
<dbReference type="KEGG" id="vch:VC_0894"/>
<dbReference type="PATRIC" id="fig|243277.26.peg.852"/>
<dbReference type="eggNOG" id="COG0301">
    <property type="taxonomic scope" value="Bacteria"/>
</dbReference>
<dbReference type="eggNOG" id="COG0607">
    <property type="taxonomic scope" value="Bacteria"/>
</dbReference>
<dbReference type="HOGENOM" id="CLU_037952_4_1_6"/>
<dbReference type="UniPathway" id="UPA00060"/>
<dbReference type="Proteomes" id="UP000000584">
    <property type="component" value="Chromosome 1"/>
</dbReference>
<dbReference type="GO" id="GO:0005829">
    <property type="term" value="C:cytosol"/>
    <property type="evidence" value="ECO:0000318"/>
    <property type="project" value="GO_Central"/>
</dbReference>
<dbReference type="GO" id="GO:0005524">
    <property type="term" value="F:ATP binding"/>
    <property type="evidence" value="ECO:0007669"/>
    <property type="project" value="UniProtKB-UniRule"/>
</dbReference>
<dbReference type="GO" id="GO:0004810">
    <property type="term" value="F:CCA tRNA nucleotidyltransferase activity"/>
    <property type="evidence" value="ECO:0007669"/>
    <property type="project" value="InterPro"/>
</dbReference>
<dbReference type="GO" id="GO:0000049">
    <property type="term" value="F:tRNA binding"/>
    <property type="evidence" value="ECO:0007669"/>
    <property type="project" value="UniProtKB-UniRule"/>
</dbReference>
<dbReference type="GO" id="GO:0140741">
    <property type="term" value="F:tRNA-uracil-4 sulfurtransferase activity"/>
    <property type="evidence" value="ECO:0007669"/>
    <property type="project" value="UniProtKB-EC"/>
</dbReference>
<dbReference type="GO" id="GO:0009228">
    <property type="term" value="P:thiamine biosynthetic process"/>
    <property type="evidence" value="ECO:0007669"/>
    <property type="project" value="UniProtKB-KW"/>
</dbReference>
<dbReference type="GO" id="GO:0009229">
    <property type="term" value="P:thiamine diphosphate biosynthetic process"/>
    <property type="evidence" value="ECO:0007669"/>
    <property type="project" value="UniProtKB-UniRule"/>
</dbReference>
<dbReference type="GO" id="GO:0052837">
    <property type="term" value="P:thiazole biosynthetic process"/>
    <property type="evidence" value="ECO:0000318"/>
    <property type="project" value="GO_Central"/>
</dbReference>
<dbReference type="GO" id="GO:0002937">
    <property type="term" value="P:tRNA 4-thiouridine biosynthesis"/>
    <property type="evidence" value="ECO:0000318"/>
    <property type="project" value="GO_Central"/>
</dbReference>
<dbReference type="CDD" id="cd01712">
    <property type="entry name" value="PPase_ThiI"/>
    <property type="match status" value="1"/>
</dbReference>
<dbReference type="CDD" id="cd00158">
    <property type="entry name" value="RHOD"/>
    <property type="match status" value="1"/>
</dbReference>
<dbReference type="CDD" id="cd11716">
    <property type="entry name" value="THUMP_ThiI"/>
    <property type="match status" value="1"/>
</dbReference>
<dbReference type="FunFam" id="3.40.50.620:FF:000029">
    <property type="entry name" value="tRNA sulfurtransferase"/>
    <property type="match status" value="1"/>
</dbReference>
<dbReference type="Gene3D" id="3.30.2130.30">
    <property type="match status" value="1"/>
</dbReference>
<dbReference type="Gene3D" id="3.40.50.620">
    <property type="entry name" value="HUPs"/>
    <property type="match status" value="1"/>
</dbReference>
<dbReference type="Gene3D" id="3.40.250.10">
    <property type="entry name" value="Rhodanese-like domain"/>
    <property type="match status" value="1"/>
</dbReference>
<dbReference type="HAMAP" id="MF_00021">
    <property type="entry name" value="ThiI"/>
    <property type="match status" value="1"/>
</dbReference>
<dbReference type="InterPro" id="IPR001763">
    <property type="entry name" value="Rhodanese-like_dom"/>
</dbReference>
<dbReference type="InterPro" id="IPR036873">
    <property type="entry name" value="Rhodanese-like_dom_sf"/>
</dbReference>
<dbReference type="InterPro" id="IPR014729">
    <property type="entry name" value="Rossmann-like_a/b/a_fold"/>
</dbReference>
<dbReference type="InterPro" id="IPR020536">
    <property type="entry name" value="ThiI_AANH"/>
</dbReference>
<dbReference type="InterPro" id="IPR054173">
    <property type="entry name" value="ThiI_fer"/>
</dbReference>
<dbReference type="InterPro" id="IPR049961">
    <property type="entry name" value="ThiI_N"/>
</dbReference>
<dbReference type="InterPro" id="IPR026340">
    <property type="entry name" value="THII_Thiazole_biosynth_dom"/>
</dbReference>
<dbReference type="InterPro" id="IPR004114">
    <property type="entry name" value="THUMP_dom"/>
</dbReference>
<dbReference type="InterPro" id="IPR049962">
    <property type="entry name" value="THUMP_ThiI"/>
</dbReference>
<dbReference type="InterPro" id="IPR003720">
    <property type="entry name" value="tRNA_STrfase"/>
</dbReference>
<dbReference type="InterPro" id="IPR050102">
    <property type="entry name" value="tRNA_sulfurtransferase_ThiI"/>
</dbReference>
<dbReference type="NCBIfam" id="TIGR04271">
    <property type="entry name" value="ThiI_C_thiazole"/>
    <property type="match status" value="1"/>
</dbReference>
<dbReference type="NCBIfam" id="TIGR00342">
    <property type="entry name" value="tRNA uracil 4-sulfurtransferase ThiI"/>
    <property type="match status" value="1"/>
</dbReference>
<dbReference type="PANTHER" id="PTHR43209">
    <property type="entry name" value="TRNA SULFURTRANSFERASE"/>
    <property type="match status" value="1"/>
</dbReference>
<dbReference type="PANTHER" id="PTHR43209:SF1">
    <property type="entry name" value="TRNA SULFURTRANSFERASE"/>
    <property type="match status" value="1"/>
</dbReference>
<dbReference type="Pfam" id="PF00581">
    <property type="entry name" value="Rhodanese"/>
    <property type="match status" value="1"/>
</dbReference>
<dbReference type="Pfam" id="PF02568">
    <property type="entry name" value="ThiI"/>
    <property type="match status" value="1"/>
</dbReference>
<dbReference type="Pfam" id="PF22025">
    <property type="entry name" value="ThiI_fer"/>
    <property type="match status" value="1"/>
</dbReference>
<dbReference type="Pfam" id="PF02926">
    <property type="entry name" value="THUMP"/>
    <property type="match status" value="1"/>
</dbReference>
<dbReference type="SMART" id="SM00981">
    <property type="entry name" value="THUMP"/>
    <property type="match status" value="1"/>
</dbReference>
<dbReference type="SUPFAM" id="SSF52402">
    <property type="entry name" value="Adenine nucleotide alpha hydrolases-like"/>
    <property type="match status" value="1"/>
</dbReference>
<dbReference type="SUPFAM" id="SSF52821">
    <property type="entry name" value="Rhodanese/Cell cycle control phosphatase"/>
    <property type="match status" value="1"/>
</dbReference>
<dbReference type="SUPFAM" id="SSF143437">
    <property type="entry name" value="THUMP domain-like"/>
    <property type="match status" value="1"/>
</dbReference>
<dbReference type="PROSITE" id="PS50206">
    <property type="entry name" value="RHODANESE_3"/>
    <property type="match status" value="1"/>
</dbReference>
<dbReference type="PROSITE" id="PS51165">
    <property type="entry name" value="THUMP"/>
    <property type="match status" value="1"/>
</dbReference>
<evidence type="ECO:0000255" key="1">
    <source>
        <dbReference type="HAMAP-Rule" id="MF_00021"/>
    </source>
</evidence>
<evidence type="ECO:0000305" key="2"/>
<protein>
    <recommendedName>
        <fullName evidence="1">tRNA sulfurtransferase</fullName>
        <ecNumber evidence="1">2.8.1.4</ecNumber>
    </recommendedName>
    <alternativeName>
        <fullName evidence="1">Sulfur carrier protein ThiS sulfurtransferase</fullName>
    </alternativeName>
    <alternativeName>
        <fullName evidence="1">Thiamine biosynthesis protein ThiI</fullName>
    </alternativeName>
    <alternativeName>
        <fullName evidence="1">tRNA 4-thiouridine synthase</fullName>
    </alternativeName>
</protein>
<name>THII_VIBCH</name>